<protein>
    <recommendedName>
        <fullName>Babycurus-toxin 1</fullName>
        <shortName>BcTx1</shortName>
    </recommendedName>
</protein>
<dbReference type="SMR" id="P59891"/>
<dbReference type="GO" id="GO:0005576">
    <property type="term" value="C:extracellular region"/>
    <property type="evidence" value="ECO:0007669"/>
    <property type="project" value="UniProtKB-SubCell"/>
</dbReference>
<dbReference type="GO" id="GO:0019871">
    <property type="term" value="F:sodium channel inhibitor activity"/>
    <property type="evidence" value="ECO:0007669"/>
    <property type="project" value="InterPro"/>
</dbReference>
<dbReference type="GO" id="GO:0090729">
    <property type="term" value="F:toxin activity"/>
    <property type="evidence" value="ECO:0007669"/>
    <property type="project" value="UniProtKB-KW"/>
</dbReference>
<dbReference type="Gene3D" id="3.30.30.10">
    <property type="entry name" value="Knottin, scorpion toxin-like"/>
    <property type="match status" value="1"/>
</dbReference>
<dbReference type="InterPro" id="IPR044062">
    <property type="entry name" value="LCN-type_CS_alpha_beta_dom"/>
</dbReference>
<dbReference type="InterPro" id="IPR036574">
    <property type="entry name" value="Scorpion_toxin-like_sf"/>
</dbReference>
<dbReference type="InterPro" id="IPR002061">
    <property type="entry name" value="Scorpion_toxinL/defensin"/>
</dbReference>
<dbReference type="Pfam" id="PF00537">
    <property type="entry name" value="Toxin_3"/>
    <property type="match status" value="1"/>
</dbReference>
<dbReference type="SUPFAM" id="SSF57095">
    <property type="entry name" value="Scorpion toxin-like"/>
    <property type="match status" value="1"/>
</dbReference>
<dbReference type="PROSITE" id="PS51863">
    <property type="entry name" value="LCN_CSAB"/>
    <property type="match status" value="1"/>
</dbReference>
<evidence type="ECO:0000255" key="1">
    <source>
        <dbReference type="PROSITE-ProRule" id="PRU01210"/>
    </source>
</evidence>
<evidence type="ECO:0000269" key="2">
    <source>
    </source>
</evidence>
<evidence type="ECO:0000305" key="3"/>
<proteinExistence type="evidence at protein level"/>
<keyword id="KW-0903">Direct protein sequencing</keyword>
<keyword id="KW-0872">Ion channel impairing toxin</keyword>
<keyword id="KW-0528">Neurotoxin</keyword>
<keyword id="KW-0964">Secreted</keyword>
<keyword id="KW-0800">Toxin</keyword>
<keyword id="KW-0738">Voltage-gated sodium channel impairing toxin</keyword>
<organism>
    <name type="scientific">Babycurus centrurimorphus</name>
    <name type="common">East African scorpion</name>
    <dbReference type="NCBI Taxonomy" id="244728"/>
    <lineage>
        <taxon>Eukaryota</taxon>
        <taxon>Metazoa</taxon>
        <taxon>Ecdysozoa</taxon>
        <taxon>Arthropoda</taxon>
        <taxon>Chelicerata</taxon>
        <taxon>Arachnida</taxon>
        <taxon>Scorpiones</taxon>
        <taxon>Buthida</taxon>
        <taxon>Buthoidea</taxon>
        <taxon>Buthidae</taxon>
        <taxon>Babycurus</taxon>
    </lineage>
</organism>
<sequence length="30" mass="3248">LKDGYPTNSKGCKISGCLPGENKFCLNECQ</sequence>
<accession>P59891</accession>
<reference key="1">
    <citation type="journal article" date="1997" name="Toxicon">
        <title>Action of babycurus-toxin 1 from the east African scorpion Babycurus centrurimorphus on the isolated cockroach giant axon.</title>
        <authorList>
            <person name="Ben Khalifa R."/>
            <person name="Stankiewicz M."/>
            <person name="Pelhate M."/>
            <person name="Serrano-Hernandez S.E."/>
            <person name="Possani L.D."/>
            <person name="Hinkel H."/>
            <person name="Mebs D."/>
        </authorList>
    </citation>
    <scope>PROTEIN SEQUENCE</scope>
    <scope>FUNCTION</scope>
    <source>
        <tissue>Venom</tissue>
    </source>
</reference>
<comment type="function">
    <text evidence="2">Binds to sodium channels (Nav) and inhibits both the activation and inactivation of the activated channels, thereby blocking neuronal transmission.</text>
</comment>
<comment type="subcellular location">
    <subcellularLocation>
        <location>Secreted</location>
    </subcellularLocation>
</comment>
<comment type="tissue specificity">
    <text>Expressed by the venom gland.</text>
</comment>
<comment type="domain">
    <text evidence="3">Has the structural arrangement of an alpha-helix connected to antiparallel beta-sheets by disulfide bonds (CS-alpha/beta).</text>
</comment>
<comment type="similarity">
    <text evidence="3">Belongs to the long (4 C-C) scorpion toxin superfamily. Sodium channel inhibitor family.</text>
</comment>
<feature type="chain" id="PRO_0000066727" description="Babycurus-toxin 1">
    <location>
        <begin position="1"/>
        <end position="30" status="greater than"/>
    </location>
</feature>
<feature type="domain" description="LCN-type CS-alpha/beta" evidence="1">
    <location>
        <begin position="2"/>
        <end position="30" status="greater than"/>
    </location>
</feature>
<feature type="non-terminal residue">
    <location>
        <position position="30"/>
    </location>
</feature>
<name>BCTX1_BABCE</name>